<gene>
    <name evidence="1" type="primary">mnmG</name>
    <name evidence="1" type="synonym">gidA</name>
    <name type="ordered locus">SEN3688</name>
</gene>
<organism>
    <name type="scientific">Salmonella enteritidis PT4 (strain P125109)</name>
    <dbReference type="NCBI Taxonomy" id="550537"/>
    <lineage>
        <taxon>Bacteria</taxon>
        <taxon>Pseudomonadati</taxon>
        <taxon>Pseudomonadota</taxon>
        <taxon>Gammaproteobacteria</taxon>
        <taxon>Enterobacterales</taxon>
        <taxon>Enterobacteriaceae</taxon>
        <taxon>Salmonella</taxon>
    </lineage>
</organism>
<feature type="chain" id="PRO_1000095661" description="tRNA uridine 5-carboxymethylaminomethyl modification enzyme MnmG">
    <location>
        <begin position="1"/>
        <end position="629"/>
    </location>
</feature>
<feature type="binding site" evidence="1">
    <location>
        <begin position="13"/>
        <end position="18"/>
    </location>
    <ligand>
        <name>FAD</name>
        <dbReference type="ChEBI" id="CHEBI:57692"/>
    </ligand>
</feature>
<feature type="binding site" evidence="1">
    <location>
        <position position="125"/>
    </location>
    <ligand>
        <name>FAD</name>
        <dbReference type="ChEBI" id="CHEBI:57692"/>
    </ligand>
</feature>
<feature type="binding site" evidence="1">
    <location>
        <position position="180"/>
    </location>
    <ligand>
        <name>FAD</name>
        <dbReference type="ChEBI" id="CHEBI:57692"/>
    </ligand>
</feature>
<feature type="binding site" evidence="1">
    <location>
        <begin position="273"/>
        <end position="287"/>
    </location>
    <ligand>
        <name>NAD(+)</name>
        <dbReference type="ChEBI" id="CHEBI:57540"/>
    </ligand>
</feature>
<feature type="binding site" evidence="1">
    <location>
        <position position="370"/>
    </location>
    <ligand>
        <name>FAD</name>
        <dbReference type="ChEBI" id="CHEBI:57692"/>
    </ligand>
</feature>
<protein>
    <recommendedName>
        <fullName evidence="1">tRNA uridine 5-carboxymethylaminomethyl modification enzyme MnmG</fullName>
    </recommendedName>
    <alternativeName>
        <fullName evidence="1">Glucose-inhibited division protein A</fullName>
    </alternativeName>
</protein>
<sequence>MFYQDPFDVIIIGGGHAGTEAAMAAARMGQQTLLLTHNIDTLGQMSCNPAIGGIGKGHLVKEVDALGGLMAKAIDQAGIQFRILNASKGPAVRATRAQADRVLYRQAVRTALENQPNLMIFQQAVEDLIVENDRVVGAVTQMGLKFRAKAVVLTVGTFLDGKIHIGLDNYSGGRAGDPPSIPLSRRLRELPLRVSRLKTGTPPRIDARTIDFSVLAQQHGDNPMPVFSFMGNASQHPQQVPCYITHTNEKTHDVIRNNLDRSPMYAGVIEGIGPRYCPSIEDKVMRFADRNQHQIFLEPEGLTSNEIYPNGISTSLPFDVQMQIVRSMQGMENAKIVRPGYAIEYDFFDPRDLKPTLESKFIHGLFFAGQINGTTGYEEAAAQGLLAGLNAARLSADKEGWAPARSQAYLGVLVDDLCTLGTKEPYRMFTSRAEYRLMLREDNADLRLTEMGRELGLVDDERWARFNEKLESIERERQRLKSTWVTPSAESADEVNAHLTTPLSREASGEDLLRRPEMTYAQLTSLAAFAPALEDEQAAEQVEIQVKYEGYIARQQDEIEKQLRNENTLLPATLDYRQVSGLSNEVIAKLNDHKPASIGQASRISGVTPAAISILLVWLKKQGMLRRSA</sequence>
<keyword id="KW-0963">Cytoplasm</keyword>
<keyword id="KW-0274">FAD</keyword>
<keyword id="KW-0285">Flavoprotein</keyword>
<keyword id="KW-0520">NAD</keyword>
<keyword id="KW-0819">tRNA processing</keyword>
<accession>B5QVE1</accession>
<name>MNMG_SALEP</name>
<evidence type="ECO:0000255" key="1">
    <source>
        <dbReference type="HAMAP-Rule" id="MF_00129"/>
    </source>
</evidence>
<comment type="function">
    <text evidence="1">NAD-binding protein involved in the addition of a carboxymethylaminomethyl (cmnm) group at the wobble position (U34) of certain tRNAs, forming tRNA-cmnm(5)s(2)U34.</text>
</comment>
<comment type="cofactor">
    <cofactor evidence="1">
        <name>FAD</name>
        <dbReference type="ChEBI" id="CHEBI:57692"/>
    </cofactor>
</comment>
<comment type="subunit">
    <text evidence="1">Homodimer. Heterotetramer of two MnmE and two MnmG subunits.</text>
</comment>
<comment type="subcellular location">
    <subcellularLocation>
        <location evidence="1">Cytoplasm</location>
    </subcellularLocation>
</comment>
<comment type="similarity">
    <text evidence="1">Belongs to the MnmG family.</text>
</comment>
<dbReference type="EMBL" id="AM933172">
    <property type="protein sequence ID" value="CAR35264.1"/>
    <property type="molecule type" value="Genomic_DNA"/>
</dbReference>
<dbReference type="RefSeq" id="WP_000499875.1">
    <property type="nucleotide sequence ID" value="NC_011294.1"/>
</dbReference>
<dbReference type="SMR" id="B5QVE1"/>
<dbReference type="KEGG" id="set:SEN3688"/>
<dbReference type="HOGENOM" id="CLU_007831_2_2_6"/>
<dbReference type="Proteomes" id="UP000000613">
    <property type="component" value="Chromosome"/>
</dbReference>
<dbReference type="GO" id="GO:0005829">
    <property type="term" value="C:cytosol"/>
    <property type="evidence" value="ECO:0007669"/>
    <property type="project" value="TreeGrafter"/>
</dbReference>
<dbReference type="GO" id="GO:0050660">
    <property type="term" value="F:flavin adenine dinucleotide binding"/>
    <property type="evidence" value="ECO:0007669"/>
    <property type="project" value="UniProtKB-UniRule"/>
</dbReference>
<dbReference type="GO" id="GO:0030488">
    <property type="term" value="P:tRNA methylation"/>
    <property type="evidence" value="ECO:0007669"/>
    <property type="project" value="TreeGrafter"/>
</dbReference>
<dbReference type="GO" id="GO:0002098">
    <property type="term" value="P:tRNA wobble uridine modification"/>
    <property type="evidence" value="ECO:0007669"/>
    <property type="project" value="InterPro"/>
</dbReference>
<dbReference type="FunFam" id="1.10.10.1800:FF:000001">
    <property type="entry name" value="tRNA uridine 5-carboxymethylaminomethyl modification enzyme MnmG"/>
    <property type="match status" value="1"/>
</dbReference>
<dbReference type="FunFam" id="1.10.150.570:FF:000001">
    <property type="entry name" value="tRNA uridine 5-carboxymethylaminomethyl modification enzyme MnmG"/>
    <property type="match status" value="1"/>
</dbReference>
<dbReference type="FunFam" id="3.50.50.60:FF:000002">
    <property type="entry name" value="tRNA uridine 5-carboxymethylaminomethyl modification enzyme MnmG"/>
    <property type="match status" value="1"/>
</dbReference>
<dbReference type="FunFam" id="3.50.50.60:FF:000010">
    <property type="entry name" value="tRNA uridine 5-carboxymethylaminomethyl modification enzyme MnmG"/>
    <property type="match status" value="1"/>
</dbReference>
<dbReference type="Gene3D" id="3.50.50.60">
    <property type="entry name" value="FAD/NAD(P)-binding domain"/>
    <property type="match status" value="2"/>
</dbReference>
<dbReference type="Gene3D" id="1.10.150.570">
    <property type="entry name" value="GidA associated domain, C-terminal subdomain"/>
    <property type="match status" value="1"/>
</dbReference>
<dbReference type="Gene3D" id="1.10.10.1800">
    <property type="entry name" value="tRNA uridine 5-carboxymethylaminomethyl modification enzyme MnmG/GidA"/>
    <property type="match status" value="1"/>
</dbReference>
<dbReference type="HAMAP" id="MF_00129">
    <property type="entry name" value="MnmG_GidA"/>
    <property type="match status" value="1"/>
</dbReference>
<dbReference type="InterPro" id="IPR036188">
    <property type="entry name" value="FAD/NAD-bd_sf"/>
</dbReference>
<dbReference type="InterPro" id="IPR049312">
    <property type="entry name" value="GIDA_C_N"/>
</dbReference>
<dbReference type="InterPro" id="IPR004416">
    <property type="entry name" value="MnmG"/>
</dbReference>
<dbReference type="InterPro" id="IPR002218">
    <property type="entry name" value="MnmG-rel"/>
</dbReference>
<dbReference type="InterPro" id="IPR020595">
    <property type="entry name" value="MnmG-rel_CS"/>
</dbReference>
<dbReference type="InterPro" id="IPR026904">
    <property type="entry name" value="MnmG_C"/>
</dbReference>
<dbReference type="InterPro" id="IPR047001">
    <property type="entry name" value="MnmG_C_subdom"/>
</dbReference>
<dbReference type="InterPro" id="IPR044920">
    <property type="entry name" value="MnmG_C_subdom_sf"/>
</dbReference>
<dbReference type="InterPro" id="IPR040131">
    <property type="entry name" value="MnmG_N"/>
</dbReference>
<dbReference type="NCBIfam" id="TIGR00136">
    <property type="entry name" value="mnmG_gidA"/>
    <property type="match status" value="1"/>
</dbReference>
<dbReference type="PANTHER" id="PTHR11806">
    <property type="entry name" value="GLUCOSE INHIBITED DIVISION PROTEIN A"/>
    <property type="match status" value="1"/>
</dbReference>
<dbReference type="PANTHER" id="PTHR11806:SF0">
    <property type="entry name" value="PROTEIN MTO1 HOMOLOG, MITOCHONDRIAL"/>
    <property type="match status" value="1"/>
</dbReference>
<dbReference type="Pfam" id="PF01134">
    <property type="entry name" value="GIDA"/>
    <property type="match status" value="1"/>
</dbReference>
<dbReference type="Pfam" id="PF21680">
    <property type="entry name" value="GIDA_C_1st"/>
    <property type="match status" value="1"/>
</dbReference>
<dbReference type="Pfam" id="PF13932">
    <property type="entry name" value="SAM_GIDA_C"/>
    <property type="match status" value="1"/>
</dbReference>
<dbReference type="SMART" id="SM01228">
    <property type="entry name" value="GIDA_assoc_3"/>
    <property type="match status" value="1"/>
</dbReference>
<dbReference type="SUPFAM" id="SSF51905">
    <property type="entry name" value="FAD/NAD(P)-binding domain"/>
    <property type="match status" value="1"/>
</dbReference>
<dbReference type="PROSITE" id="PS01280">
    <property type="entry name" value="GIDA_1"/>
    <property type="match status" value="1"/>
</dbReference>
<dbReference type="PROSITE" id="PS01281">
    <property type="entry name" value="GIDA_2"/>
    <property type="match status" value="1"/>
</dbReference>
<reference key="1">
    <citation type="journal article" date="2008" name="Genome Res.">
        <title>Comparative genome analysis of Salmonella enteritidis PT4 and Salmonella gallinarum 287/91 provides insights into evolutionary and host adaptation pathways.</title>
        <authorList>
            <person name="Thomson N.R."/>
            <person name="Clayton D.J."/>
            <person name="Windhorst D."/>
            <person name="Vernikos G."/>
            <person name="Davidson S."/>
            <person name="Churcher C."/>
            <person name="Quail M.A."/>
            <person name="Stevens M."/>
            <person name="Jones M.A."/>
            <person name="Watson M."/>
            <person name="Barron A."/>
            <person name="Layton A."/>
            <person name="Pickard D."/>
            <person name="Kingsley R.A."/>
            <person name="Bignell A."/>
            <person name="Clark L."/>
            <person name="Harris B."/>
            <person name="Ormond D."/>
            <person name="Abdellah Z."/>
            <person name="Brooks K."/>
            <person name="Cherevach I."/>
            <person name="Chillingworth T."/>
            <person name="Woodward J."/>
            <person name="Norberczak H."/>
            <person name="Lord A."/>
            <person name="Arrowsmith C."/>
            <person name="Jagels K."/>
            <person name="Moule S."/>
            <person name="Mungall K."/>
            <person name="Saunders M."/>
            <person name="Whitehead S."/>
            <person name="Chabalgoity J.A."/>
            <person name="Maskell D."/>
            <person name="Humphreys T."/>
            <person name="Roberts M."/>
            <person name="Barrow P.A."/>
            <person name="Dougan G."/>
            <person name="Parkhill J."/>
        </authorList>
    </citation>
    <scope>NUCLEOTIDE SEQUENCE [LARGE SCALE GENOMIC DNA]</scope>
    <source>
        <strain>P125109</strain>
    </source>
</reference>
<proteinExistence type="inferred from homology"/>